<feature type="chain" id="PRO_1000006219" description="Serine hydroxymethyltransferase">
    <location>
        <begin position="1"/>
        <end position="416"/>
    </location>
</feature>
<feature type="binding site" evidence="1">
    <location>
        <position position="121"/>
    </location>
    <ligand>
        <name>(6S)-5,6,7,8-tetrahydrofolate</name>
        <dbReference type="ChEBI" id="CHEBI:57453"/>
    </ligand>
</feature>
<feature type="binding site" evidence="1">
    <location>
        <begin position="125"/>
        <end position="127"/>
    </location>
    <ligand>
        <name>(6S)-5,6,7,8-tetrahydrofolate</name>
        <dbReference type="ChEBI" id="CHEBI:57453"/>
    </ligand>
</feature>
<feature type="site" description="Plays an important role in substrate specificity" evidence="1">
    <location>
        <position position="228"/>
    </location>
</feature>
<feature type="modified residue" description="N6-(pyridoxal phosphate)lysine" evidence="1">
    <location>
        <position position="229"/>
    </location>
</feature>
<accession>A1K9B2</accession>
<name>GLYA_AZOSB</name>
<dbReference type="EC" id="2.1.2.1" evidence="1"/>
<dbReference type="EMBL" id="AM406670">
    <property type="protein sequence ID" value="CAL95417.1"/>
    <property type="molecule type" value="Genomic_DNA"/>
</dbReference>
<dbReference type="RefSeq" id="WP_011766527.1">
    <property type="nucleotide sequence ID" value="NC_008702.1"/>
</dbReference>
<dbReference type="SMR" id="A1K9B2"/>
<dbReference type="STRING" id="62928.azo2801"/>
<dbReference type="KEGG" id="azo:azo2801"/>
<dbReference type="eggNOG" id="COG0112">
    <property type="taxonomic scope" value="Bacteria"/>
</dbReference>
<dbReference type="HOGENOM" id="CLU_022477_2_1_4"/>
<dbReference type="UniPathway" id="UPA00193"/>
<dbReference type="UniPathway" id="UPA00288">
    <property type="reaction ID" value="UER01023"/>
</dbReference>
<dbReference type="Proteomes" id="UP000002588">
    <property type="component" value="Chromosome"/>
</dbReference>
<dbReference type="GO" id="GO:0005829">
    <property type="term" value="C:cytosol"/>
    <property type="evidence" value="ECO:0007669"/>
    <property type="project" value="TreeGrafter"/>
</dbReference>
<dbReference type="GO" id="GO:0004372">
    <property type="term" value="F:glycine hydroxymethyltransferase activity"/>
    <property type="evidence" value="ECO:0007669"/>
    <property type="project" value="UniProtKB-UniRule"/>
</dbReference>
<dbReference type="GO" id="GO:0030170">
    <property type="term" value="F:pyridoxal phosphate binding"/>
    <property type="evidence" value="ECO:0007669"/>
    <property type="project" value="UniProtKB-UniRule"/>
</dbReference>
<dbReference type="GO" id="GO:0019264">
    <property type="term" value="P:glycine biosynthetic process from serine"/>
    <property type="evidence" value="ECO:0007669"/>
    <property type="project" value="UniProtKB-UniRule"/>
</dbReference>
<dbReference type="GO" id="GO:0035999">
    <property type="term" value="P:tetrahydrofolate interconversion"/>
    <property type="evidence" value="ECO:0007669"/>
    <property type="project" value="UniProtKB-UniRule"/>
</dbReference>
<dbReference type="CDD" id="cd00378">
    <property type="entry name" value="SHMT"/>
    <property type="match status" value="1"/>
</dbReference>
<dbReference type="FunFam" id="3.40.640.10:FF:000001">
    <property type="entry name" value="Serine hydroxymethyltransferase"/>
    <property type="match status" value="1"/>
</dbReference>
<dbReference type="FunFam" id="3.90.1150.10:FF:000003">
    <property type="entry name" value="Serine hydroxymethyltransferase"/>
    <property type="match status" value="1"/>
</dbReference>
<dbReference type="Gene3D" id="3.90.1150.10">
    <property type="entry name" value="Aspartate Aminotransferase, domain 1"/>
    <property type="match status" value="1"/>
</dbReference>
<dbReference type="Gene3D" id="3.40.640.10">
    <property type="entry name" value="Type I PLP-dependent aspartate aminotransferase-like (Major domain)"/>
    <property type="match status" value="1"/>
</dbReference>
<dbReference type="HAMAP" id="MF_00051">
    <property type="entry name" value="SHMT"/>
    <property type="match status" value="1"/>
</dbReference>
<dbReference type="InterPro" id="IPR015424">
    <property type="entry name" value="PyrdxlP-dep_Trfase"/>
</dbReference>
<dbReference type="InterPro" id="IPR015421">
    <property type="entry name" value="PyrdxlP-dep_Trfase_major"/>
</dbReference>
<dbReference type="InterPro" id="IPR015422">
    <property type="entry name" value="PyrdxlP-dep_Trfase_small"/>
</dbReference>
<dbReference type="InterPro" id="IPR001085">
    <property type="entry name" value="Ser_HO-MeTrfase"/>
</dbReference>
<dbReference type="InterPro" id="IPR049943">
    <property type="entry name" value="Ser_HO-MeTrfase-like"/>
</dbReference>
<dbReference type="InterPro" id="IPR019798">
    <property type="entry name" value="Ser_HO-MeTrfase_PLP_BS"/>
</dbReference>
<dbReference type="InterPro" id="IPR039429">
    <property type="entry name" value="SHMT-like_dom"/>
</dbReference>
<dbReference type="NCBIfam" id="NF000586">
    <property type="entry name" value="PRK00011.1"/>
    <property type="match status" value="1"/>
</dbReference>
<dbReference type="PANTHER" id="PTHR11680">
    <property type="entry name" value="SERINE HYDROXYMETHYLTRANSFERASE"/>
    <property type="match status" value="1"/>
</dbReference>
<dbReference type="PANTHER" id="PTHR11680:SF50">
    <property type="entry name" value="SERINE HYDROXYMETHYLTRANSFERASE"/>
    <property type="match status" value="1"/>
</dbReference>
<dbReference type="Pfam" id="PF00464">
    <property type="entry name" value="SHMT"/>
    <property type="match status" value="1"/>
</dbReference>
<dbReference type="PIRSF" id="PIRSF000412">
    <property type="entry name" value="SHMT"/>
    <property type="match status" value="1"/>
</dbReference>
<dbReference type="SUPFAM" id="SSF53383">
    <property type="entry name" value="PLP-dependent transferases"/>
    <property type="match status" value="1"/>
</dbReference>
<dbReference type="PROSITE" id="PS00096">
    <property type="entry name" value="SHMT"/>
    <property type="match status" value="1"/>
</dbReference>
<protein>
    <recommendedName>
        <fullName evidence="1">Serine hydroxymethyltransferase</fullName>
        <shortName evidence="1">SHMT</shortName>
        <shortName evidence="1">Serine methylase</shortName>
        <ecNumber evidence="1">2.1.2.1</ecNumber>
    </recommendedName>
</protein>
<gene>
    <name evidence="1" type="primary">glyA</name>
    <name type="ordered locus">azo2801</name>
</gene>
<comment type="function">
    <text evidence="1">Catalyzes the reversible interconversion of serine and glycine with tetrahydrofolate (THF) serving as the one-carbon carrier. This reaction serves as the major source of one-carbon groups required for the biosynthesis of purines, thymidylate, methionine, and other important biomolecules. Also exhibits THF-independent aldolase activity toward beta-hydroxyamino acids, producing glycine and aldehydes, via a retro-aldol mechanism.</text>
</comment>
<comment type="catalytic activity">
    <reaction evidence="1">
        <text>(6R)-5,10-methylene-5,6,7,8-tetrahydrofolate + glycine + H2O = (6S)-5,6,7,8-tetrahydrofolate + L-serine</text>
        <dbReference type="Rhea" id="RHEA:15481"/>
        <dbReference type="ChEBI" id="CHEBI:15377"/>
        <dbReference type="ChEBI" id="CHEBI:15636"/>
        <dbReference type="ChEBI" id="CHEBI:33384"/>
        <dbReference type="ChEBI" id="CHEBI:57305"/>
        <dbReference type="ChEBI" id="CHEBI:57453"/>
        <dbReference type="EC" id="2.1.2.1"/>
    </reaction>
</comment>
<comment type="cofactor">
    <cofactor evidence="1">
        <name>pyridoxal 5'-phosphate</name>
        <dbReference type="ChEBI" id="CHEBI:597326"/>
    </cofactor>
</comment>
<comment type="pathway">
    <text evidence="1">One-carbon metabolism; tetrahydrofolate interconversion.</text>
</comment>
<comment type="pathway">
    <text evidence="1">Amino-acid biosynthesis; glycine biosynthesis; glycine from L-serine: step 1/1.</text>
</comment>
<comment type="subunit">
    <text evidence="1">Homodimer.</text>
</comment>
<comment type="subcellular location">
    <subcellularLocation>
        <location evidence="1">Cytoplasm</location>
    </subcellularLocation>
</comment>
<comment type="similarity">
    <text evidence="1">Belongs to the SHMT family.</text>
</comment>
<reference key="1">
    <citation type="journal article" date="2006" name="Nat. Biotechnol.">
        <title>Complete genome of the mutualistic, N2-fixing grass endophyte Azoarcus sp. strain BH72.</title>
        <authorList>
            <person name="Krause A."/>
            <person name="Ramakumar A."/>
            <person name="Bartels D."/>
            <person name="Battistoni F."/>
            <person name="Bekel T."/>
            <person name="Boch J."/>
            <person name="Boehm M."/>
            <person name="Friedrich F."/>
            <person name="Hurek T."/>
            <person name="Krause L."/>
            <person name="Linke B."/>
            <person name="McHardy A.C."/>
            <person name="Sarkar A."/>
            <person name="Schneiker S."/>
            <person name="Syed A.A."/>
            <person name="Thauer R."/>
            <person name="Vorhoelter F.-J."/>
            <person name="Weidner S."/>
            <person name="Puehler A."/>
            <person name="Reinhold-Hurek B."/>
            <person name="Kaiser O."/>
            <person name="Goesmann A."/>
        </authorList>
    </citation>
    <scope>NUCLEOTIDE SEQUENCE [LARGE SCALE GENOMIC DNA]</scope>
    <source>
        <strain>BH72</strain>
    </source>
</reference>
<proteinExistence type="inferred from homology"/>
<keyword id="KW-0028">Amino-acid biosynthesis</keyword>
<keyword id="KW-0963">Cytoplasm</keyword>
<keyword id="KW-0554">One-carbon metabolism</keyword>
<keyword id="KW-0663">Pyridoxal phosphate</keyword>
<keyword id="KW-1185">Reference proteome</keyword>
<keyword id="KW-0808">Transferase</keyword>
<organism>
    <name type="scientific">Azoarcus sp. (strain BH72)</name>
    <dbReference type="NCBI Taxonomy" id="418699"/>
    <lineage>
        <taxon>Bacteria</taxon>
        <taxon>Pseudomonadati</taxon>
        <taxon>Pseudomonadota</taxon>
        <taxon>Betaproteobacteria</taxon>
        <taxon>Rhodocyclales</taxon>
        <taxon>Zoogloeaceae</taxon>
        <taxon>Azoarcus</taxon>
    </lineage>
</organism>
<evidence type="ECO:0000255" key="1">
    <source>
        <dbReference type="HAMAP-Rule" id="MF_00051"/>
    </source>
</evidence>
<sequence>MFSSQDTLAKVDPELWSAIQAENRRQEDHIELIASENYVSHAVMEAQGSQLTNKYAEGYPGKRYYGGCEHVDVVEQLAIDRLKKLFGADAANVQPNSGSQANQAVLMAFAKPGDTIMGMSLAEGGHLTHGMPLNMSGKWFNVVAYGLDEKEEINYAAMEALAREHKPKIIIAGASAYALRIDFERFARIAREVGAIFWVDMAHYAGLIAAGYYPNPVPHADVVTSTTHKTLRGPRGGIILMKAEHEKAINSAIFPGLQGGPLEHVIAAKAVAFKEAATPAFRDYQEQVIANARVMARVLGEERGLRIVSGRTESHVFLVDLRSKNITGKEAEAVLGSAHITVNKNSIPNDPQKPFVTSGIRIGSPAMTTRGFTEIEAEQIAHLIADVLDAPQDAAVLERVRGKVGELCAKFPVYGS</sequence>